<proteinExistence type="inferred from homology"/>
<dbReference type="EC" id="2.3.1.286" evidence="1 2"/>
<dbReference type="EMBL" id="AE009950">
    <property type="protein sequence ID" value="AAL81278.1"/>
    <property type="status" value="ALT_INIT"/>
    <property type="molecule type" value="Genomic_DNA"/>
</dbReference>
<dbReference type="RefSeq" id="WP_011012294.1">
    <property type="nucleotide sequence ID" value="NZ_CP023154.1"/>
</dbReference>
<dbReference type="SMR" id="Q8U1Q1"/>
<dbReference type="STRING" id="186497.PF1154"/>
<dbReference type="PaxDb" id="186497-PF1154"/>
<dbReference type="GeneID" id="41712963"/>
<dbReference type="KEGG" id="pfu:PF1154"/>
<dbReference type="PATRIC" id="fig|186497.12.peg.1215"/>
<dbReference type="eggNOG" id="arCOG04248">
    <property type="taxonomic scope" value="Archaea"/>
</dbReference>
<dbReference type="HOGENOM" id="CLU_023643_3_1_2"/>
<dbReference type="OrthoDB" id="728at2157"/>
<dbReference type="PhylomeDB" id="Q8U1Q1"/>
<dbReference type="Proteomes" id="UP000001013">
    <property type="component" value="Chromosome"/>
</dbReference>
<dbReference type="GO" id="GO:0005737">
    <property type="term" value="C:cytoplasm"/>
    <property type="evidence" value="ECO:0007669"/>
    <property type="project" value="UniProtKB-SubCell"/>
</dbReference>
<dbReference type="GO" id="GO:0017136">
    <property type="term" value="F:histone deacetylase activity, NAD-dependent"/>
    <property type="evidence" value="ECO:0007669"/>
    <property type="project" value="TreeGrafter"/>
</dbReference>
<dbReference type="GO" id="GO:0070403">
    <property type="term" value="F:NAD+ binding"/>
    <property type="evidence" value="ECO:0007669"/>
    <property type="project" value="UniProtKB-UniRule"/>
</dbReference>
<dbReference type="GO" id="GO:0036054">
    <property type="term" value="F:protein-malonyllysine demalonylase activity"/>
    <property type="evidence" value="ECO:0007669"/>
    <property type="project" value="InterPro"/>
</dbReference>
<dbReference type="GO" id="GO:0036055">
    <property type="term" value="F:protein-succinyllysine desuccinylase activity"/>
    <property type="evidence" value="ECO:0007669"/>
    <property type="project" value="UniProtKB-UniRule"/>
</dbReference>
<dbReference type="GO" id="GO:0008270">
    <property type="term" value="F:zinc ion binding"/>
    <property type="evidence" value="ECO:0007669"/>
    <property type="project" value="UniProtKB-UniRule"/>
</dbReference>
<dbReference type="CDD" id="cd01412">
    <property type="entry name" value="SIRT5_Af1_CobB"/>
    <property type="match status" value="1"/>
</dbReference>
<dbReference type="Gene3D" id="3.30.1600.10">
    <property type="entry name" value="SIR2/SIRT2 'Small Domain"/>
    <property type="match status" value="1"/>
</dbReference>
<dbReference type="Gene3D" id="3.40.50.1220">
    <property type="entry name" value="TPP-binding domain"/>
    <property type="match status" value="1"/>
</dbReference>
<dbReference type="HAMAP" id="MF_01121">
    <property type="entry name" value="Sirtuin_ClassIII"/>
    <property type="match status" value="1"/>
</dbReference>
<dbReference type="InterPro" id="IPR029035">
    <property type="entry name" value="DHS-like_NAD/FAD-binding_dom"/>
</dbReference>
<dbReference type="InterPro" id="IPR050134">
    <property type="entry name" value="NAD-dep_sirtuin_deacylases"/>
</dbReference>
<dbReference type="InterPro" id="IPR003000">
    <property type="entry name" value="Sirtuin"/>
</dbReference>
<dbReference type="InterPro" id="IPR026591">
    <property type="entry name" value="Sirtuin_cat_small_dom_sf"/>
</dbReference>
<dbReference type="InterPro" id="IPR027546">
    <property type="entry name" value="Sirtuin_class_III"/>
</dbReference>
<dbReference type="InterPro" id="IPR026590">
    <property type="entry name" value="Ssirtuin_cat_dom"/>
</dbReference>
<dbReference type="NCBIfam" id="NF001753">
    <property type="entry name" value="PRK00481.1-3"/>
    <property type="match status" value="1"/>
</dbReference>
<dbReference type="NCBIfam" id="NF040867">
    <property type="entry name" value="prot_deacyl_CobB"/>
    <property type="match status" value="1"/>
</dbReference>
<dbReference type="PANTHER" id="PTHR11085">
    <property type="entry name" value="NAD-DEPENDENT PROTEIN DEACYLASE SIRTUIN-5, MITOCHONDRIAL-RELATED"/>
    <property type="match status" value="1"/>
</dbReference>
<dbReference type="PANTHER" id="PTHR11085:SF10">
    <property type="entry name" value="NAD-DEPENDENT PROTEIN DEACYLASE SIRTUIN-5, MITOCHONDRIAL-RELATED"/>
    <property type="match status" value="1"/>
</dbReference>
<dbReference type="Pfam" id="PF02146">
    <property type="entry name" value="SIR2"/>
    <property type="match status" value="1"/>
</dbReference>
<dbReference type="SUPFAM" id="SSF52467">
    <property type="entry name" value="DHS-like NAD/FAD-binding domain"/>
    <property type="match status" value="1"/>
</dbReference>
<dbReference type="PROSITE" id="PS50305">
    <property type="entry name" value="SIRTUIN"/>
    <property type="match status" value="1"/>
</dbReference>
<feature type="chain" id="PRO_0000110384" description="NAD-dependent protein deacylase">
    <location>
        <begin position="1"/>
        <end position="250"/>
    </location>
</feature>
<feature type="domain" description="Deacetylase sirtuin-type" evidence="2">
    <location>
        <begin position="1"/>
        <end position="248"/>
    </location>
</feature>
<feature type="active site" description="Proton acceptor" evidence="2">
    <location>
        <position position="116"/>
    </location>
</feature>
<feature type="binding site" evidence="1">
    <location>
        <begin position="20"/>
        <end position="39"/>
    </location>
    <ligand>
        <name>NAD(+)</name>
        <dbReference type="ChEBI" id="CHEBI:57540"/>
    </ligand>
</feature>
<feature type="binding site" evidence="1">
    <location>
        <position position="64"/>
    </location>
    <ligand>
        <name>substrate</name>
    </ligand>
</feature>
<feature type="binding site" evidence="1">
    <location>
        <position position="67"/>
    </location>
    <ligand>
        <name>substrate</name>
    </ligand>
</feature>
<feature type="binding site" evidence="1">
    <location>
        <begin position="98"/>
        <end position="101"/>
    </location>
    <ligand>
        <name>NAD(+)</name>
        <dbReference type="ChEBI" id="CHEBI:57540"/>
    </ligand>
</feature>
<feature type="binding site" evidence="1">
    <location>
        <position position="124"/>
    </location>
    <ligand>
        <name>Zn(2+)</name>
        <dbReference type="ChEBI" id="CHEBI:29105"/>
    </ligand>
</feature>
<feature type="binding site" evidence="1">
    <location>
        <position position="127"/>
    </location>
    <ligand>
        <name>Zn(2+)</name>
        <dbReference type="ChEBI" id="CHEBI:29105"/>
    </ligand>
</feature>
<feature type="binding site" evidence="1">
    <location>
        <position position="150"/>
    </location>
    <ligand>
        <name>Zn(2+)</name>
        <dbReference type="ChEBI" id="CHEBI:29105"/>
    </ligand>
</feature>
<feature type="binding site" evidence="1">
    <location>
        <position position="153"/>
    </location>
    <ligand>
        <name>Zn(2+)</name>
        <dbReference type="ChEBI" id="CHEBI:29105"/>
    </ligand>
</feature>
<feature type="binding site" evidence="1">
    <location>
        <begin position="190"/>
        <end position="192"/>
    </location>
    <ligand>
        <name>NAD(+)</name>
        <dbReference type="ChEBI" id="CHEBI:57540"/>
    </ligand>
</feature>
<feature type="binding site" evidence="1">
    <location>
        <begin position="216"/>
        <end position="218"/>
    </location>
    <ligand>
        <name>NAD(+)</name>
        <dbReference type="ChEBI" id="CHEBI:57540"/>
    </ligand>
</feature>
<feature type="binding site" evidence="1">
    <location>
        <position position="234"/>
    </location>
    <ligand>
        <name>NAD(+)</name>
        <dbReference type="ChEBI" id="CHEBI:57540"/>
    </ligand>
</feature>
<gene>
    <name evidence="1" type="primary">cobB</name>
    <name type="ordered locus">PF1154</name>
</gene>
<organism>
    <name type="scientific">Pyrococcus furiosus (strain ATCC 43587 / DSM 3638 / JCM 8422 / Vc1)</name>
    <dbReference type="NCBI Taxonomy" id="186497"/>
    <lineage>
        <taxon>Archaea</taxon>
        <taxon>Methanobacteriati</taxon>
        <taxon>Methanobacteriota</taxon>
        <taxon>Thermococci</taxon>
        <taxon>Thermococcales</taxon>
        <taxon>Thermococcaceae</taxon>
        <taxon>Pyrococcus</taxon>
    </lineage>
</organism>
<evidence type="ECO:0000255" key="1">
    <source>
        <dbReference type="HAMAP-Rule" id="MF_01121"/>
    </source>
</evidence>
<evidence type="ECO:0000255" key="2">
    <source>
        <dbReference type="PROSITE-ProRule" id="PRU00236"/>
    </source>
</evidence>
<evidence type="ECO:0000305" key="3"/>
<sequence length="250" mass="27786">MLGEVSKILAKSSMAIAFTGAGISAESGIPTFRGKDGLWRKYRAEELATPEAFKRDPKLVWEFYKWRIKKILEAKPNPAHIALAELEKMGIIKAVITQNVDDLHREAGSKNVIELHGNIFRVKCTSCSYREYLKESDRIGWLLSQELPRCPKCGSLLRPDVVWFGEALPEKELTTAFSLAKKADVVLVVGTSGVVYPAAYIPYIVKESGGIVVEINIEPSAITPIADFFLRGKAGEVLPKLVEEIRRISK</sequence>
<accession>Q8U1Q1</accession>
<reference key="1">
    <citation type="journal article" date="1999" name="Genetics">
        <title>Divergence of the hyperthermophilic archaea Pyrococcus furiosus and P. horikoshii inferred from complete genomic sequences.</title>
        <authorList>
            <person name="Maeder D.L."/>
            <person name="Weiss R.B."/>
            <person name="Dunn D.M."/>
            <person name="Cherry J.L."/>
            <person name="Gonzalez J.M."/>
            <person name="DiRuggiero J."/>
            <person name="Robb F.T."/>
        </authorList>
    </citation>
    <scope>NUCLEOTIDE SEQUENCE [LARGE SCALE GENOMIC DNA]</scope>
    <source>
        <strain>ATCC 43587 / DSM 3638 / JCM 8422 / Vc1</strain>
    </source>
</reference>
<protein>
    <recommendedName>
        <fullName evidence="1">NAD-dependent protein deacylase</fullName>
        <ecNumber evidence="1 2">2.3.1.286</ecNumber>
    </recommendedName>
    <alternativeName>
        <fullName evidence="1">Regulatory protein SIR2 homolog</fullName>
    </alternativeName>
</protein>
<keyword id="KW-0963">Cytoplasm</keyword>
<keyword id="KW-0479">Metal-binding</keyword>
<keyword id="KW-0520">NAD</keyword>
<keyword id="KW-1185">Reference proteome</keyword>
<keyword id="KW-0804">Transcription</keyword>
<keyword id="KW-0805">Transcription regulation</keyword>
<keyword id="KW-0808">Transferase</keyword>
<keyword id="KW-0862">Zinc</keyword>
<name>NPD_PYRFU</name>
<comment type="function">
    <text evidence="1">NAD-dependent lysine deacetylase and desuccinylase that specifically removes acetyl and succinyl groups on target proteins. Modulates the activities of several proteins which are inactive in their acylated form. Deacetylates the N-terminal lysine residue of Alba, the major archaeal chromatin protein and that, in turn, increases Alba's DNA binding affinity, thereby repressing transcription.</text>
</comment>
<comment type="catalytic activity">
    <reaction evidence="1">
        <text>N(6)-acetyl-L-lysyl-[protein] + NAD(+) + H2O = 2''-O-acetyl-ADP-D-ribose + nicotinamide + L-lysyl-[protein]</text>
        <dbReference type="Rhea" id="RHEA:43636"/>
        <dbReference type="Rhea" id="RHEA-COMP:9752"/>
        <dbReference type="Rhea" id="RHEA-COMP:10731"/>
        <dbReference type="ChEBI" id="CHEBI:15377"/>
        <dbReference type="ChEBI" id="CHEBI:17154"/>
        <dbReference type="ChEBI" id="CHEBI:29969"/>
        <dbReference type="ChEBI" id="CHEBI:57540"/>
        <dbReference type="ChEBI" id="CHEBI:61930"/>
        <dbReference type="ChEBI" id="CHEBI:83767"/>
        <dbReference type="EC" id="2.3.1.286"/>
    </reaction>
</comment>
<comment type="catalytic activity">
    <reaction evidence="1">
        <text>N(6)-succinyl-L-lysyl-[protein] + NAD(+) + H2O = 2''-O-succinyl-ADP-D-ribose + nicotinamide + L-lysyl-[protein]</text>
        <dbReference type="Rhea" id="RHEA:47668"/>
        <dbReference type="Rhea" id="RHEA-COMP:9752"/>
        <dbReference type="Rhea" id="RHEA-COMP:11877"/>
        <dbReference type="ChEBI" id="CHEBI:15377"/>
        <dbReference type="ChEBI" id="CHEBI:17154"/>
        <dbReference type="ChEBI" id="CHEBI:29969"/>
        <dbReference type="ChEBI" id="CHEBI:57540"/>
        <dbReference type="ChEBI" id="CHEBI:87830"/>
        <dbReference type="ChEBI" id="CHEBI:87832"/>
    </reaction>
</comment>
<comment type="cofactor">
    <cofactor evidence="1">
        <name>Zn(2+)</name>
        <dbReference type="ChEBI" id="CHEBI:29105"/>
    </cofactor>
    <text evidence="1">Binds 1 zinc ion per subunit.</text>
</comment>
<comment type="subcellular location">
    <subcellularLocation>
        <location evidence="1">Cytoplasm</location>
    </subcellularLocation>
</comment>
<comment type="domain">
    <text evidence="1">2 residues (Tyr-64 and Arg-67) present in a large hydrophobic pocket are probably involved in substrate specificity. They are important for desuccinylation activity, but dispensable for deacetylation activity.</text>
</comment>
<comment type="similarity">
    <text evidence="1">Belongs to the sirtuin family. Class III subfamily.</text>
</comment>
<comment type="sequence caution" evidence="3">
    <conflict type="erroneous initiation">
        <sequence resource="EMBL-CDS" id="AAL81278"/>
    </conflict>
    <text>Extended N-terminus.</text>
</comment>